<dbReference type="EMBL" id="AP008934">
    <property type="protein sequence ID" value="BAE18371.1"/>
    <property type="molecule type" value="Genomic_DNA"/>
</dbReference>
<dbReference type="RefSeq" id="WP_002483201.1">
    <property type="nucleotide sequence ID" value="NZ_MTGA01000038.1"/>
</dbReference>
<dbReference type="SMR" id="Q49XX3"/>
<dbReference type="GeneID" id="66867455"/>
<dbReference type="KEGG" id="ssp:SSP1226"/>
<dbReference type="eggNOG" id="COG0231">
    <property type="taxonomic scope" value="Bacteria"/>
</dbReference>
<dbReference type="HOGENOM" id="CLU_074944_0_1_9"/>
<dbReference type="OrthoDB" id="9801844at2"/>
<dbReference type="UniPathway" id="UPA00345"/>
<dbReference type="Proteomes" id="UP000006371">
    <property type="component" value="Chromosome"/>
</dbReference>
<dbReference type="GO" id="GO:0005737">
    <property type="term" value="C:cytoplasm"/>
    <property type="evidence" value="ECO:0007669"/>
    <property type="project" value="UniProtKB-SubCell"/>
</dbReference>
<dbReference type="GO" id="GO:0003746">
    <property type="term" value="F:translation elongation factor activity"/>
    <property type="evidence" value="ECO:0007669"/>
    <property type="project" value="UniProtKB-UniRule"/>
</dbReference>
<dbReference type="GO" id="GO:0043043">
    <property type="term" value="P:peptide biosynthetic process"/>
    <property type="evidence" value="ECO:0007669"/>
    <property type="project" value="InterPro"/>
</dbReference>
<dbReference type="CDD" id="cd04470">
    <property type="entry name" value="S1_EF-P_repeat_1"/>
    <property type="match status" value="1"/>
</dbReference>
<dbReference type="CDD" id="cd05794">
    <property type="entry name" value="S1_EF-P_repeat_2"/>
    <property type="match status" value="1"/>
</dbReference>
<dbReference type="FunFam" id="2.30.30.30:FF:000010">
    <property type="entry name" value="Elongation factor P"/>
    <property type="match status" value="1"/>
</dbReference>
<dbReference type="FunFam" id="2.40.50.140:FF:000004">
    <property type="entry name" value="Elongation factor P"/>
    <property type="match status" value="1"/>
</dbReference>
<dbReference type="FunFam" id="2.40.50.140:FF:000009">
    <property type="entry name" value="Elongation factor P"/>
    <property type="match status" value="1"/>
</dbReference>
<dbReference type="Gene3D" id="2.30.30.30">
    <property type="match status" value="1"/>
</dbReference>
<dbReference type="Gene3D" id="2.40.50.140">
    <property type="entry name" value="Nucleic acid-binding proteins"/>
    <property type="match status" value="2"/>
</dbReference>
<dbReference type="HAMAP" id="MF_00141">
    <property type="entry name" value="EF_P"/>
    <property type="match status" value="1"/>
</dbReference>
<dbReference type="InterPro" id="IPR015365">
    <property type="entry name" value="Elong-fact-P_C"/>
</dbReference>
<dbReference type="InterPro" id="IPR012340">
    <property type="entry name" value="NA-bd_OB-fold"/>
</dbReference>
<dbReference type="InterPro" id="IPR014722">
    <property type="entry name" value="Rib_uL2_dom2"/>
</dbReference>
<dbReference type="InterPro" id="IPR020599">
    <property type="entry name" value="Transl_elong_fac_P/YeiP"/>
</dbReference>
<dbReference type="InterPro" id="IPR013185">
    <property type="entry name" value="Transl_elong_KOW-like"/>
</dbReference>
<dbReference type="InterPro" id="IPR001059">
    <property type="entry name" value="Transl_elong_P/YeiP_cen"/>
</dbReference>
<dbReference type="InterPro" id="IPR013852">
    <property type="entry name" value="Transl_elong_P/YeiP_CS"/>
</dbReference>
<dbReference type="InterPro" id="IPR011768">
    <property type="entry name" value="Transl_elongation_fac_P"/>
</dbReference>
<dbReference type="InterPro" id="IPR008991">
    <property type="entry name" value="Translation_prot_SH3-like_sf"/>
</dbReference>
<dbReference type="NCBIfam" id="TIGR00038">
    <property type="entry name" value="efp"/>
    <property type="match status" value="1"/>
</dbReference>
<dbReference type="NCBIfam" id="NF001810">
    <property type="entry name" value="PRK00529.1"/>
    <property type="match status" value="1"/>
</dbReference>
<dbReference type="PANTHER" id="PTHR30053">
    <property type="entry name" value="ELONGATION FACTOR P"/>
    <property type="match status" value="1"/>
</dbReference>
<dbReference type="PANTHER" id="PTHR30053:SF12">
    <property type="entry name" value="ELONGATION FACTOR P (EF-P) FAMILY PROTEIN"/>
    <property type="match status" value="1"/>
</dbReference>
<dbReference type="Pfam" id="PF01132">
    <property type="entry name" value="EFP"/>
    <property type="match status" value="1"/>
</dbReference>
<dbReference type="Pfam" id="PF08207">
    <property type="entry name" value="EFP_N"/>
    <property type="match status" value="1"/>
</dbReference>
<dbReference type="Pfam" id="PF09285">
    <property type="entry name" value="Elong-fact-P_C"/>
    <property type="match status" value="1"/>
</dbReference>
<dbReference type="PIRSF" id="PIRSF005901">
    <property type="entry name" value="EF-P"/>
    <property type="match status" value="1"/>
</dbReference>
<dbReference type="SMART" id="SM01185">
    <property type="entry name" value="EFP"/>
    <property type="match status" value="1"/>
</dbReference>
<dbReference type="SMART" id="SM00841">
    <property type="entry name" value="Elong-fact-P_C"/>
    <property type="match status" value="1"/>
</dbReference>
<dbReference type="SUPFAM" id="SSF50249">
    <property type="entry name" value="Nucleic acid-binding proteins"/>
    <property type="match status" value="2"/>
</dbReference>
<dbReference type="SUPFAM" id="SSF50104">
    <property type="entry name" value="Translation proteins SH3-like domain"/>
    <property type="match status" value="1"/>
</dbReference>
<dbReference type="PROSITE" id="PS01275">
    <property type="entry name" value="EFP"/>
    <property type="match status" value="1"/>
</dbReference>
<reference key="1">
    <citation type="journal article" date="2005" name="Proc. Natl. Acad. Sci. U.S.A.">
        <title>Whole genome sequence of Staphylococcus saprophyticus reveals the pathogenesis of uncomplicated urinary tract infection.</title>
        <authorList>
            <person name="Kuroda M."/>
            <person name="Yamashita A."/>
            <person name="Hirakawa H."/>
            <person name="Kumano M."/>
            <person name="Morikawa K."/>
            <person name="Higashide M."/>
            <person name="Maruyama A."/>
            <person name="Inose Y."/>
            <person name="Matoba K."/>
            <person name="Toh H."/>
            <person name="Kuhara S."/>
            <person name="Hattori M."/>
            <person name="Ohta T."/>
        </authorList>
    </citation>
    <scope>NUCLEOTIDE SEQUENCE [LARGE SCALE GENOMIC DNA]</scope>
    <source>
        <strain>ATCC 15305 / DSM 20229 / NCIMB 8711 / NCTC 7292 / S-41</strain>
    </source>
</reference>
<protein>
    <recommendedName>
        <fullName evidence="1">Elongation factor P</fullName>
        <shortName evidence="1">EF-P</shortName>
    </recommendedName>
</protein>
<keyword id="KW-0963">Cytoplasm</keyword>
<keyword id="KW-0251">Elongation factor</keyword>
<keyword id="KW-0648">Protein biosynthesis</keyword>
<keyword id="KW-1185">Reference proteome</keyword>
<name>EFP_STAS1</name>
<comment type="function">
    <text evidence="1">Involved in peptide bond synthesis. Stimulates efficient translation and peptide-bond synthesis on native or reconstituted 70S ribosomes in vitro. Probably functions indirectly by altering the affinity of the ribosome for aminoacyl-tRNA, thus increasing their reactivity as acceptors for peptidyl transferase.</text>
</comment>
<comment type="pathway">
    <text evidence="1">Protein biosynthesis; polypeptide chain elongation.</text>
</comment>
<comment type="subcellular location">
    <subcellularLocation>
        <location evidence="1">Cytoplasm</location>
    </subcellularLocation>
</comment>
<comment type="similarity">
    <text evidence="1">Belongs to the elongation factor P family.</text>
</comment>
<sequence>MISVNDFKTGLTISVDNGIWKVLDFQHVKPGKGSAFVRSKLRNLRTGAIQEKTFRGGEKVETALIENRRMQYLYADGDTHVFMDNQTFEQTELPADYLEYELNFLKANMEVQIQSYENETLGVELPKTVELTVTETEPGIKGDTANGATKSATVETGYTLNVPLFVNEGDVLVINTGDGSYISRA</sequence>
<organism>
    <name type="scientific">Staphylococcus saprophyticus subsp. saprophyticus (strain ATCC 15305 / DSM 20229 / NCIMB 8711 / NCTC 7292 / S-41)</name>
    <dbReference type="NCBI Taxonomy" id="342451"/>
    <lineage>
        <taxon>Bacteria</taxon>
        <taxon>Bacillati</taxon>
        <taxon>Bacillota</taxon>
        <taxon>Bacilli</taxon>
        <taxon>Bacillales</taxon>
        <taxon>Staphylococcaceae</taxon>
        <taxon>Staphylococcus</taxon>
    </lineage>
</organism>
<evidence type="ECO:0000255" key="1">
    <source>
        <dbReference type="HAMAP-Rule" id="MF_00141"/>
    </source>
</evidence>
<feature type="chain" id="PRO_1000010869" description="Elongation factor P">
    <location>
        <begin position="1"/>
        <end position="185"/>
    </location>
</feature>
<gene>
    <name evidence="1" type="primary">efp</name>
    <name type="ordered locus">SSP1226</name>
</gene>
<proteinExistence type="inferred from homology"/>
<accession>Q49XX3</accession>